<keyword id="KW-0008">Acetylcholine receptor inhibiting toxin</keyword>
<keyword id="KW-0027">Amidation</keyword>
<keyword id="KW-0903">Direct protein sequencing</keyword>
<keyword id="KW-0872">Ion channel impairing toxin</keyword>
<keyword id="KW-0528">Neurotoxin</keyword>
<keyword id="KW-0629">Postsynaptic neurotoxin</keyword>
<keyword id="KW-1275">Proton-gated sodium channel impairing toxin</keyword>
<keyword id="KW-0964">Secreted</keyword>
<keyword id="KW-0800">Toxin</keyword>
<evidence type="ECO:0000250" key="1">
    <source>
        <dbReference type="UniProtKB" id="P0DOZ7"/>
    </source>
</evidence>
<evidence type="ECO:0000269" key="2">
    <source>
    </source>
</evidence>
<evidence type="ECO:0000303" key="3">
    <source>
    </source>
</evidence>
<evidence type="ECO:0000305" key="4"/>
<evidence type="ECO:0000305" key="5">
    <source>
    </source>
</evidence>
<feature type="peptide" id="PRO_0000447682" description="Conorfamide-As1" evidence="2">
    <location>
        <begin position="1"/>
        <end position="12"/>
    </location>
</feature>
<feature type="modified residue" description="Phenylalanine amide; in Conorfamide As1a" evidence="2">
    <location>
        <position position="12"/>
    </location>
</feature>
<proteinExistence type="evidence at protein level"/>
<protein>
    <recommendedName>
        <fullName evidence="5">Conorfamide-As1</fullName>
    </recommendedName>
    <alternativeName>
        <fullName evidence="3">Conorfamide-As1a</fullName>
        <shortName evidence="1">CNF-As1a</shortName>
        <shortName evidence="1">Cono-RFamide-As1a</shortName>
    </alternativeName>
    <alternativeName>
        <fullName evidence="3">Conorfamide-As1b</fullName>
        <shortName evidence="1">CNF-As1b</shortName>
        <shortName evidence="1">Cono-RFamide-As1b</shortName>
    </alternativeName>
</protein>
<organism>
    <name type="scientific">Conus cancellatus</name>
    <name type="common">Cancellate cone</name>
    <name type="synonym">Conus austini</name>
    <dbReference type="NCBI Taxonomy" id="289020"/>
    <lineage>
        <taxon>Eukaryota</taxon>
        <taxon>Metazoa</taxon>
        <taxon>Spiralia</taxon>
        <taxon>Lophotrochozoa</taxon>
        <taxon>Mollusca</taxon>
        <taxon>Gastropoda</taxon>
        <taxon>Caenogastropoda</taxon>
        <taxon>Neogastropoda</taxon>
        <taxon>Conoidea</taxon>
        <taxon>Conidae</taxon>
        <taxon>Conus</taxon>
        <taxon>Dauciconus</taxon>
    </lineage>
</organism>
<reference key="1">
    <citation type="journal article" date="2019" name="Biochem. Pharmacol.">
        <title>Novel conorfamides from Conus austini venom modulate both nicotinic acetylcholine receptors and acid-sensing ion channels.</title>
        <authorList>
            <person name="Jin A.H."/>
            <person name="Cristofori-Armstrong B."/>
            <person name="Rash L.D."/>
            <person name="Roman-Gonzalez S.A."/>
            <person name="Espinosa R.A."/>
            <person name="Lewis R.J."/>
            <person name="Alewood P.F."/>
            <person name="Vetter I."/>
        </authorList>
    </citation>
    <scope>PROTEIN SEQUENCE</scope>
    <scope>FUNCTION</scope>
    <scope>SUBCELLULAR LOCATION</scope>
    <scope>AMIDATION AT PHE-12</scope>
    <scope>MASS SPECTROMETRY</scope>
    <scope>SYNTHESIS</scope>
    <source>
        <tissue>Venom</tissue>
    </source>
</reference>
<dbReference type="GO" id="GO:0005576">
    <property type="term" value="C:extracellular region"/>
    <property type="evidence" value="ECO:0007669"/>
    <property type="project" value="UniProtKB-SubCell"/>
</dbReference>
<dbReference type="GO" id="GO:0035792">
    <property type="term" value="C:host cell postsynaptic membrane"/>
    <property type="evidence" value="ECO:0007669"/>
    <property type="project" value="UniProtKB-KW"/>
</dbReference>
<dbReference type="GO" id="GO:0030550">
    <property type="term" value="F:acetylcholine receptor inhibitor activity"/>
    <property type="evidence" value="ECO:0007669"/>
    <property type="project" value="UniProtKB-KW"/>
</dbReference>
<dbReference type="GO" id="GO:0099106">
    <property type="term" value="F:ion channel regulator activity"/>
    <property type="evidence" value="ECO:0007669"/>
    <property type="project" value="UniProtKB-KW"/>
</dbReference>
<dbReference type="GO" id="GO:0090729">
    <property type="term" value="F:toxin activity"/>
    <property type="evidence" value="ECO:0007669"/>
    <property type="project" value="UniProtKB-KW"/>
</dbReference>
<name>CRF1_CONCF</name>
<sequence length="12" mass="1520">RIKKPIFAFPRF</sequence>
<accession>P0DQH7</accession>
<comment type="function">
    <text evidence="2">Conorfamide As1a: this amidated form is active on both ASIC channels and nicotinic acetylcholine receptors (nAChRs) (PubMed:31028742). Shows a weak inhibition of peak current of rat ASIC1a and rat ASIC3 (PubMed:31028742). Inhibits desensitization of ASIC1a and to a lesser degree ASIC3 currents, resulting in a sustained opening of channels in the presence of low pH (PubMed:31028742). Inhibits with a slow reversibility human alpha-7/CHRNA7 nAChRs (IC(50)=737-4984 nM) and with rapid reversibility human alpha-1-beta-1-delta-epsilon (CHRNA1-CHRNB1-CHRND-CHRNE) nAChRs (IC(50)=215 nM) (PubMed:31028742).</text>
</comment>
<comment type="function">
    <text evidence="2">Conorfamide As1b: this non-amidated form is only weakly active on both ASIC channels and nicotinic acetylcholine receptors (nAChRs) (PubMed:31028742). Shows a weak inhibition of peak current of rat ASIC1a (PubMed:31028742). Shows a very weak inhibition of peak current of rat ASIC3 (PubMed:31028742). No inhibition of desensitization on both rat ASIC1a and ASIC3 are observed (PubMed:31028742). Reversibly inhibits both human alpha-7/CHRNA7 nAChRs (IC(50)=2029-8464 nM) and human alpha-1-beta-1-delta-epsilon (CHRNA1-CHRNB1-CHRND-CHRNE) nAChRs (IC(50)=820 nM) (PubMed:31028742).</text>
</comment>
<comment type="subcellular location">
    <subcellularLocation>
        <location evidence="2">Secreted</location>
    </subcellularLocation>
</comment>
<comment type="tissue specificity">
    <text evidence="5">Expressed by the venom duct.</text>
</comment>
<comment type="PTM">
    <text evidence="2">Both amidated and non-amidated conorfamides As1 are found in the venom. Amidation is important since amidated peptide is more active.</text>
</comment>
<comment type="mass spectrometry" mass="1631.97" method="MALDI" evidence="2">
    <text>Conorfamide As1a.</text>
</comment>
<comment type="mass spectrometry" mass="1633.01" method="MALDI" evidence="2">
    <text>Conorfamide As1b.</text>
</comment>
<comment type="similarity">
    <text evidence="4">Belongs to the FARP (FMRFamide related peptide) family.</text>
</comment>